<feature type="chain" id="PRO_0000202929" description="Peroxisomal membrane protein PEX18">
    <location>
        <begin position="1"/>
        <end position="283"/>
    </location>
</feature>
<feature type="region of interest" description="Disordered" evidence="1">
    <location>
        <begin position="179"/>
        <end position="201"/>
    </location>
</feature>
<feature type="compositionally biased region" description="Acidic residues" evidence="1">
    <location>
        <begin position="180"/>
        <end position="200"/>
    </location>
</feature>
<feature type="mutagenesis site" description="Abolished interaction with PEX7." evidence="3">
    <original>S</original>
    <variation>F</variation>
    <location>
        <position position="230"/>
    </location>
</feature>
<gene>
    <name type="primary">PEX18</name>
    <name type="ordered locus">YHR160C</name>
</gene>
<sequence>MNSNRCQTNEVNKFISSTEKGPFTGRDNTLSFNKIGSRLNSPPILKDKIELKFLQHSEDLNQSRSYVNIRPRTLEDQSYKFEAPNLNDNETSWAKDFRYNFPKNVEPPIENQIANLNINNGLRTSQTDFPLGFYSQKNFNIASFPVVDHQIFKTTGLEHPINSHIDSLINAEFSELEASSLEEDVHTEEENSGTSLEDEETAMKGLASDIIEFCDNNSANKDVKERLNSSKFMGLMGSISDGSIVLKKDNGTERNLQKHVGFCFQNSGNWAGLEFHDVEDRIA</sequence>
<name>PEX18_YEAST</name>
<reference key="1">
    <citation type="journal article" date="1994" name="Science">
        <title>Complete nucleotide sequence of Saccharomyces cerevisiae chromosome VIII.</title>
        <authorList>
            <person name="Johnston M."/>
            <person name="Andrews S."/>
            <person name="Brinkman R."/>
            <person name="Cooper J."/>
            <person name="Ding H."/>
            <person name="Dover J."/>
            <person name="Du Z."/>
            <person name="Favello A."/>
            <person name="Fulton L."/>
            <person name="Gattung S."/>
            <person name="Geisel C."/>
            <person name="Kirsten J."/>
            <person name="Kucaba T."/>
            <person name="Hillier L.W."/>
            <person name="Jier M."/>
            <person name="Johnston L."/>
            <person name="Langston Y."/>
            <person name="Latreille P."/>
            <person name="Louis E.J."/>
            <person name="Macri C."/>
            <person name="Mardis E."/>
            <person name="Menezes S."/>
            <person name="Mouser L."/>
            <person name="Nhan M."/>
            <person name="Rifkin L."/>
            <person name="Riles L."/>
            <person name="St Peter H."/>
            <person name="Trevaskis E."/>
            <person name="Vaughan K."/>
            <person name="Vignati D."/>
            <person name="Wilcox L."/>
            <person name="Wohldman P."/>
            <person name="Waterston R."/>
            <person name="Wilson R."/>
            <person name="Vaudin M."/>
        </authorList>
    </citation>
    <scope>NUCLEOTIDE SEQUENCE [LARGE SCALE GENOMIC DNA]</scope>
    <source>
        <strain>ATCC 204508 / S288c</strain>
    </source>
</reference>
<reference key="2">
    <citation type="journal article" date="2014" name="G3 (Bethesda)">
        <title>The reference genome sequence of Saccharomyces cerevisiae: Then and now.</title>
        <authorList>
            <person name="Engel S.R."/>
            <person name="Dietrich F.S."/>
            <person name="Fisk D.G."/>
            <person name="Binkley G."/>
            <person name="Balakrishnan R."/>
            <person name="Costanzo M.C."/>
            <person name="Dwight S.S."/>
            <person name="Hitz B.C."/>
            <person name="Karra K."/>
            <person name="Nash R.S."/>
            <person name="Weng S."/>
            <person name="Wong E.D."/>
            <person name="Lloyd P."/>
            <person name="Skrzypek M.S."/>
            <person name="Miyasato S.R."/>
            <person name="Simison M."/>
            <person name="Cherry J.M."/>
        </authorList>
    </citation>
    <scope>GENOME REANNOTATION</scope>
    <source>
        <strain>ATCC 204508 / S288c</strain>
    </source>
</reference>
<reference key="3">
    <citation type="journal article" date="1998" name="J. Cell Biol.">
        <title>Pex18p and Pex21p, a novel pair of related peroxins essential for peroxisomal targeting by the PTS2 pathway.</title>
        <authorList>
            <person name="Purdue P.E."/>
            <person name="Yang X."/>
            <person name="Lazarow P.B."/>
        </authorList>
    </citation>
    <scope>FUNCTION</scope>
    <scope>SUBCELLULAR LOCATION</scope>
    <scope>INTERACTION WITH PEX7</scope>
</reference>
<reference key="4">
    <citation type="journal article" date="2001" name="J. Biol. Chem.">
        <title>Pex18p is constitutively degraded during peroxisome biogenesis.</title>
        <authorList>
            <person name="Purdue P.E."/>
            <person name="Lazarow P.B."/>
        </authorList>
    </citation>
    <scope>UBIQUITINATION</scope>
    <scope>INTERACTION WITH PEX7</scope>
    <scope>STABILITY</scope>
</reference>
<reference key="5">
    <citation type="journal article" date="2002" name="Mol. Cell. Biol.">
        <title>Interactions of Pex7p and Pex18p/Pex21p with the peroxisomal docking machinery: implications for the first steps in PTS2 protein import.</title>
        <authorList>
            <person name="Stein K."/>
            <person name="Schell-Steven A."/>
            <person name="Erdmann R."/>
            <person name="Rottensteiner H."/>
        </authorList>
    </citation>
    <scope>FUNCTION</scope>
    <scope>INTERACTION WITH PEX7 AND PEX13</scope>
</reference>
<reference key="6">
    <citation type="journal article" date="2004" name="Mol. Cell. Biol.">
        <title>Functional similarity between the peroxisomal PTS2 receptor binding protein Pex18p and the N-terminal half of the PTS1 receptor Pex5p.</title>
        <authorList>
            <person name="Schaefer A."/>
            <person name="Kerssen D."/>
            <person name="Veenhuis M."/>
            <person name="Kunau W.-H."/>
            <person name="Schliebs W."/>
        </authorList>
    </citation>
    <scope>FUNCTION</scope>
</reference>
<reference key="7">
    <citation type="journal article" date="2001" name="EMBO Rep.">
        <title>Yarrowia lipolytica Pex20p, Saccharomyces cerevisiae Pex18p/Pex21p and mammalian Pex5pL fulfil a common function in the early steps of the peroxisomal PTS2 import pathway.</title>
        <authorList>
            <person name="Einwaechter H."/>
            <person name="Sowinski S."/>
            <person name="Kunau W.H."/>
            <person name="Schliebs W."/>
        </authorList>
    </citation>
    <scope>INTERACTION WITH PEX7</scope>
    <scope>MUTAGENESIS OF SER-230</scope>
</reference>
<evidence type="ECO:0000256" key="1">
    <source>
        <dbReference type="SAM" id="MobiDB-lite"/>
    </source>
</evidence>
<evidence type="ECO:0000269" key="2">
    <source>
    </source>
</evidence>
<evidence type="ECO:0000269" key="3">
    <source>
    </source>
</evidence>
<evidence type="ECO:0000269" key="4">
    <source>
    </source>
</evidence>
<evidence type="ECO:0000269" key="5">
    <source>
    </source>
</evidence>
<evidence type="ECO:0000269" key="6">
    <source>
    </source>
</evidence>
<comment type="function">
    <text evidence="4 5 6">Involved in peroxisome biogenesis and the import of peroxisomal matrix proteins that contain the peroxisomal targeting sequence PTS2 (PubMed:12167700, PubMed:15456864, PubMed:9864360). Required for peroxisomal targeting of PEX7 and growth on oleate (PubMed:12167700, PubMed:15456864, PubMed:9864360).</text>
</comment>
<comment type="subunit">
    <text evidence="2 3 4 6">Interacts with PEX7; The interaction with PEX7 stabilizes PEX18 (PubMed:11590152, PubMed:11606420, PubMed:12167700, PubMed:9864360). Interacts with PEX13 (PubMed:12167700).</text>
</comment>
<comment type="interaction">
    <interactant intactId="EBI-24803">
        <id>P38855</id>
    </interactant>
    <interactant intactId="EBI-13183">
        <id>P39108</id>
        <label>PEX7</label>
    </interactant>
    <organismsDiffer>false</organismsDiffer>
    <experiments>6</experiments>
</comment>
<comment type="subcellular location">
    <subcellularLocation>
        <location evidence="6">Cytoplasm</location>
    </subcellularLocation>
    <subcellularLocation>
        <location evidence="6">Peroxisome membrane</location>
        <topology evidence="6">Peripheral membrane protein</topology>
        <orientation evidence="6">Cytoplasmic side</orientation>
    </subcellularLocation>
</comment>
<comment type="PTM">
    <text evidence="2">Ubiquitinated in a UBC4/UBC5 dependent manner.</text>
</comment>
<protein>
    <recommendedName>
        <fullName>Peroxisomal membrane protein PEX18</fullName>
    </recommendedName>
    <alternativeName>
        <fullName>Peroxin-18</fullName>
    </alternativeName>
</protein>
<proteinExistence type="evidence at protein level"/>
<organism>
    <name type="scientific">Saccharomyces cerevisiae (strain ATCC 204508 / S288c)</name>
    <name type="common">Baker's yeast</name>
    <dbReference type="NCBI Taxonomy" id="559292"/>
    <lineage>
        <taxon>Eukaryota</taxon>
        <taxon>Fungi</taxon>
        <taxon>Dikarya</taxon>
        <taxon>Ascomycota</taxon>
        <taxon>Saccharomycotina</taxon>
        <taxon>Saccharomycetes</taxon>
        <taxon>Saccharomycetales</taxon>
        <taxon>Saccharomycetaceae</taxon>
        <taxon>Saccharomyces</taxon>
    </lineage>
</organism>
<accession>P38855</accession>
<accession>D3DLA9</accession>
<dbReference type="EMBL" id="U10397">
    <property type="protein sequence ID" value="AAB68992.1"/>
    <property type="molecule type" value="Genomic_DNA"/>
</dbReference>
<dbReference type="EMBL" id="BK006934">
    <property type="protein sequence ID" value="DAA06853.1"/>
    <property type="molecule type" value="Genomic_DNA"/>
</dbReference>
<dbReference type="PIR" id="S46770">
    <property type="entry name" value="S46770"/>
</dbReference>
<dbReference type="RefSeq" id="NP_012030.1">
    <property type="nucleotide sequence ID" value="NM_001179291.1"/>
</dbReference>
<dbReference type="SMR" id="P38855"/>
<dbReference type="BioGRID" id="36594">
    <property type="interactions" value="80"/>
</dbReference>
<dbReference type="ComplexPortal" id="CPX-1905">
    <property type="entry name" value="Peroxisomal PEX7-PEX18 receptor complex"/>
</dbReference>
<dbReference type="DIP" id="DIP-1502N"/>
<dbReference type="FunCoup" id="P38855">
    <property type="interactions" value="54"/>
</dbReference>
<dbReference type="IntAct" id="P38855">
    <property type="interactions" value="5"/>
</dbReference>
<dbReference type="MINT" id="P38855"/>
<dbReference type="STRING" id="4932.YHR160C"/>
<dbReference type="TCDB" id="3.A.20.1.5">
    <property type="family name" value="the peroxisomal protein importer (ppi) family"/>
</dbReference>
<dbReference type="iPTMnet" id="P38855"/>
<dbReference type="PaxDb" id="4932-YHR160C"/>
<dbReference type="PeptideAtlas" id="P38855"/>
<dbReference type="EnsemblFungi" id="YHR160C_mRNA">
    <property type="protein sequence ID" value="YHR160C"/>
    <property type="gene ID" value="YHR160C"/>
</dbReference>
<dbReference type="GeneID" id="856565"/>
<dbReference type="KEGG" id="sce:YHR160C"/>
<dbReference type="AGR" id="SGD:S000001203"/>
<dbReference type="SGD" id="S000001203">
    <property type="gene designation" value="PEX18"/>
</dbReference>
<dbReference type="VEuPathDB" id="FungiDB:YHR160C"/>
<dbReference type="HOGENOM" id="CLU_984200_0_0_1"/>
<dbReference type="InParanoid" id="P38855"/>
<dbReference type="OMA" id="PINSHID"/>
<dbReference type="OrthoDB" id="4041356at2759"/>
<dbReference type="BioCyc" id="YEAST:G3O-31195-MONOMER"/>
<dbReference type="BioGRID-ORCS" id="856565">
    <property type="hits" value="0 hits in 10 CRISPR screens"/>
</dbReference>
<dbReference type="PRO" id="PR:P38855"/>
<dbReference type="Proteomes" id="UP000002311">
    <property type="component" value="Chromosome VIII"/>
</dbReference>
<dbReference type="RNAct" id="P38855">
    <property type="molecule type" value="protein"/>
</dbReference>
<dbReference type="GO" id="GO:0062137">
    <property type="term" value="C:cargo receptor complex"/>
    <property type="evidence" value="ECO:0000353"/>
    <property type="project" value="ComplexPortal"/>
</dbReference>
<dbReference type="GO" id="GO:0005737">
    <property type="term" value="C:cytoplasm"/>
    <property type="evidence" value="ECO:0000314"/>
    <property type="project" value="ComplexPortal"/>
</dbReference>
<dbReference type="GO" id="GO:0005829">
    <property type="term" value="C:cytosol"/>
    <property type="evidence" value="ECO:0000314"/>
    <property type="project" value="SGD"/>
</dbReference>
<dbReference type="GO" id="GO:0005778">
    <property type="term" value="C:peroxisomal membrane"/>
    <property type="evidence" value="ECO:0000314"/>
    <property type="project" value="ComplexPortal"/>
</dbReference>
<dbReference type="GO" id="GO:0005777">
    <property type="term" value="C:peroxisome"/>
    <property type="evidence" value="ECO:0000314"/>
    <property type="project" value="SGD"/>
</dbReference>
<dbReference type="GO" id="GO:0016558">
    <property type="term" value="P:protein import into peroxisome matrix"/>
    <property type="evidence" value="ECO:0000315"/>
    <property type="project" value="SGD"/>
</dbReference>
<dbReference type="Gene3D" id="6.10.280.230">
    <property type="match status" value="1"/>
</dbReference>
<dbReference type="InterPro" id="IPR056940">
    <property type="entry name" value="PEX18_PEX21_C"/>
</dbReference>
<dbReference type="Pfam" id="PF25098">
    <property type="entry name" value="PEX18_PEX21_C"/>
    <property type="match status" value="1"/>
</dbReference>
<keyword id="KW-0963">Cytoplasm</keyword>
<keyword id="KW-0472">Membrane</keyword>
<keyword id="KW-0576">Peroxisome</keyword>
<keyword id="KW-1185">Reference proteome</keyword>
<keyword id="KW-0832">Ubl conjugation</keyword>